<accession>Q54KR9</accession>
<comment type="function">
    <text evidence="1">Component of the cap-binding complex (CBC), which binds co-transcriptionally to the 5' cap of pre-mRNAs and is involved in various processes such as pre-mRNA splicing and RNA-mediated gene silencing (RNAi). The CBC complex is involved in miRNA-mediated RNA interference and is required for primary microRNAs (miRNAs) processing. In the CBC complex, ncbp2 recognizes and binds capped RNAs (m7GpppG-capped RNA) but requires ncbp1 to stabilize the movement of its N-terminal loop and lock the CBC into a high affinity cap-binding state with the cap structure (By similarity).</text>
</comment>
<comment type="subunit">
    <text evidence="1">Component of the nuclear cap-binding complex (CBC), a heterodimer composed of ncbp1 and ncbp2 that interacts with m7GpppG-capped RNA.</text>
</comment>
<comment type="subcellular location">
    <subcellularLocation>
        <location evidence="1">Nucleus</location>
    </subcellularLocation>
</comment>
<comment type="similarity">
    <text evidence="4">Belongs to the RRM NCBP2 family.</text>
</comment>
<dbReference type="EMBL" id="AAFI02000098">
    <property type="protein sequence ID" value="EAL63873.1"/>
    <property type="molecule type" value="Genomic_DNA"/>
</dbReference>
<dbReference type="RefSeq" id="XP_637361.1">
    <property type="nucleotide sequence ID" value="XM_632269.1"/>
</dbReference>
<dbReference type="SMR" id="Q54KR9"/>
<dbReference type="FunCoup" id="Q54KR9">
    <property type="interactions" value="416"/>
</dbReference>
<dbReference type="STRING" id="44689.Q54KR9"/>
<dbReference type="PaxDb" id="44689-DDB0233456"/>
<dbReference type="EnsemblProtists" id="EAL63873">
    <property type="protein sequence ID" value="EAL63873"/>
    <property type="gene ID" value="DDB_G0287197"/>
</dbReference>
<dbReference type="GeneID" id="8625983"/>
<dbReference type="KEGG" id="ddi:DDB_G0287197"/>
<dbReference type="dictyBase" id="DDB_G0287197">
    <property type="gene designation" value="ncbp2"/>
</dbReference>
<dbReference type="VEuPathDB" id="AmoebaDB:DDB_G0287197"/>
<dbReference type="eggNOG" id="KOG0121">
    <property type="taxonomic scope" value="Eukaryota"/>
</dbReference>
<dbReference type="HOGENOM" id="CLU_070952_0_2_1"/>
<dbReference type="InParanoid" id="Q54KR9"/>
<dbReference type="OMA" id="YSGKRNR"/>
<dbReference type="PhylomeDB" id="Q54KR9"/>
<dbReference type="Reactome" id="R-DDI-111367">
    <property type="pathway name" value="SLBP independent Processing of Histone Pre-mRNAs"/>
</dbReference>
<dbReference type="Reactome" id="R-DDI-113418">
    <property type="pathway name" value="Formation of the Early Elongation Complex"/>
</dbReference>
<dbReference type="Reactome" id="R-DDI-674695">
    <property type="pathway name" value="RNA Polymerase II Pre-transcription Events"/>
</dbReference>
<dbReference type="Reactome" id="R-DDI-6807505">
    <property type="pathway name" value="RNA polymerase II transcribes snRNA genes"/>
</dbReference>
<dbReference type="Reactome" id="R-DDI-72086">
    <property type="pathway name" value="mRNA Capping"/>
</dbReference>
<dbReference type="Reactome" id="R-DDI-72163">
    <property type="pathway name" value="mRNA Splicing - Major Pathway"/>
</dbReference>
<dbReference type="Reactome" id="R-DDI-72203">
    <property type="pathway name" value="Processing of Capped Intron-Containing Pre-mRNA"/>
</dbReference>
<dbReference type="Reactome" id="R-DDI-73856">
    <property type="pathway name" value="RNA Polymerase II Transcription Termination"/>
</dbReference>
<dbReference type="Reactome" id="R-DDI-77588">
    <property type="pathway name" value="SLBP Dependent Processing of Replication-Dependent Histone Pre-mRNAs"/>
</dbReference>
<dbReference type="Reactome" id="R-DDI-77595">
    <property type="pathway name" value="Processing of Intronless Pre-mRNAs"/>
</dbReference>
<dbReference type="Reactome" id="R-DDI-975956">
    <property type="pathway name" value="Nonsense Mediated Decay (NMD) independent of the Exon Junction Complex (EJC)"/>
</dbReference>
<dbReference type="Reactome" id="R-DDI-975957">
    <property type="pathway name" value="Nonsense Mediated Decay (NMD) enhanced by the Exon Junction Complex (EJC)"/>
</dbReference>
<dbReference type="PRO" id="PR:Q54KR9"/>
<dbReference type="Proteomes" id="UP000002195">
    <property type="component" value="Chromosome 4"/>
</dbReference>
<dbReference type="GO" id="GO:0005846">
    <property type="term" value="C:nuclear cap binding complex"/>
    <property type="evidence" value="ECO:0000250"/>
    <property type="project" value="dictyBase"/>
</dbReference>
<dbReference type="GO" id="GO:0005634">
    <property type="term" value="C:nucleus"/>
    <property type="evidence" value="ECO:0007669"/>
    <property type="project" value="UniProtKB-SubCell"/>
</dbReference>
<dbReference type="GO" id="GO:0000339">
    <property type="term" value="F:RNA cap binding"/>
    <property type="evidence" value="ECO:0000250"/>
    <property type="project" value="dictyBase"/>
</dbReference>
<dbReference type="GO" id="GO:0045292">
    <property type="term" value="P:mRNA cis splicing, via spliceosome"/>
    <property type="evidence" value="ECO:0007669"/>
    <property type="project" value="InterPro"/>
</dbReference>
<dbReference type="GO" id="GO:0000398">
    <property type="term" value="P:mRNA splicing, via spliceosome"/>
    <property type="evidence" value="ECO:0000250"/>
    <property type="project" value="dictyBase"/>
</dbReference>
<dbReference type="GO" id="GO:0031047">
    <property type="term" value="P:regulatory ncRNA-mediated gene silencing"/>
    <property type="evidence" value="ECO:0007669"/>
    <property type="project" value="UniProtKB-KW"/>
</dbReference>
<dbReference type="CDD" id="cd12240">
    <property type="entry name" value="RRM_NCBP2"/>
    <property type="match status" value="1"/>
</dbReference>
<dbReference type="FunFam" id="3.30.70.330:FF:000128">
    <property type="entry name" value="Nuclear cap-binding protein subunit 2"/>
    <property type="match status" value="1"/>
</dbReference>
<dbReference type="Gene3D" id="3.30.70.330">
    <property type="match status" value="1"/>
</dbReference>
<dbReference type="InterPro" id="IPR027157">
    <property type="entry name" value="NCBP2"/>
</dbReference>
<dbReference type="InterPro" id="IPR034148">
    <property type="entry name" value="NCBP2_RRM"/>
</dbReference>
<dbReference type="InterPro" id="IPR012677">
    <property type="entry name" value="Nucleotide-bd_a/b_plait_sf"/>
</dbReference>
<dbReference type="InterPro" id="IPR035979">
    <property type="entry name" value="RBD_domain_sf"/>
</dbReference>
<dbReference type="InterPro" id="IPR000504">
    <property type="entry name" value="RRM_dom"/>
</dbReference>
<dbReference type="PANTHER" id="PTHR18847">
    <property type="entry name" value="20 KD NUCLEAR CAP BINDING PROTEIN"/>
    <property type="match status" value="1"/>
</dbReference>
<dbReference type="PANTHER" id="PTHR18847:SF0">
    <property type="entry name" value="NUCLEAR CAP-BINDING PROTEIN SUBUNIT 2"/>
    <property type="match status" value="1"/>
</dbReference>
<dbReference type="Pfam" id="PF00076">
    <property type="entry name" value="RRM_1"/>
    <property type="match status" value="1"/>
</dbReference>
<dbReference type="SMART" id="SM00360">
    <property type="entry name" value="RRM"/>
    <property type="match status" value="1"/>
</dbReference>
<dbReference type="SUPFAM" id="SSF54928">
    <property type="entry name" value="RNA-binding domain, RBD"/>
    <property type="match status" value="1"/>
</dbReference>
<dbReference type="PROSITE" id="PS50102">
    <property type="entry name" value="RRM"/>
    <property type="match status" value="1"/>
</dbReference>
<proteinExistence type="inferred from homology"/>
<keyword id="KW-0507">mRNA processing</keyword>
<keyword id="KW-0508">mRNA splicing</keyword>
<keyword id="KW-0539">Nucleus</keyword>
<keyword id="KW-1185">Reference proteome</keyword>
<keyword id="KW-0694">RNA-binding</keyword>
<keyword id="KW-0943">RNA-mediated gene silencing</keyword>
<evidence type="ECO:0000250" key="1"/>
<evidence type="ECO:0000255" key="2">
    <source>
        <dbReference type="PROSITE-ProRule" id="PRU00176"/>
    </source>
</evidence>
<evidence type="ECO:0000256" key="3">
    <source>
        <dbReference type="SAM" id="MobiDB-lite"/>
    </source>
</evidence>
<evidence type="ECO:0000305" key="4"/>
<feature type="chain" id="PRO_0000385276" description="Nuclear cap-binding protein subunit 2">
    <location>
        <begin position="1"/>
        <end position="234"/>
    </location>
</feature>
<feature type="domain" description="RRM" evidence="2">
    <location>
        <begin position="32"/>
        <end position="110"/>
    </location>
</feature>
<feature type="region of interest" description="Disordered" evidence="3">
    <location>
        <begin position="122"/>
        <end position="144"/>
    </location>
</feature>
<feature type="region of interest" description="Disordered" evidence="3">
    <location>
        <begin position="177"/>
        <end position="234"/>
    </location>
</feature>
<feature type="compositionally biased region" description="Basic and acidic residues" evidence="3">
    <location>
        <begin position="126"/>
        <end position="136"/>
    </location>
</feature>
<feature type="compositionally biased region" description="Polar residues" evidence="3">
    <location>
        <begin position="182"/>
        <end position="192"/>
    </location>
</feature>
<feature type="compositionally biased region" description="Basic and acidic residues" evidence="3">
    <location>
        <begin position="196"/>
        <end position="210"/>
    </location>
</feature>
<feature type="compositionally biased region" description="Polar residues" evidence="3">
    <location>
        <begin position="211"/>
        <end position="222"/>
    </location>
</feature>
<feature type="compositionally biased region" description="Basic and acidic residues" evidence="3">
    <location>
        <begin position="225"/>
        <end position="234"/>
    </location>
</feature>
<feature type="binding site" evidence="1">
    <location>
        <position position="12"/>
    </location>
    <ligand>
        <name>mRNA</name>
        <dbReference type="ChEBI" id="CHEBI:33699"/>
    </ligand>
    <ligandPart>
        <name>mRNA cap</name>
    </ligandPart>
</feature>
<feature type="binding site" evidence="1">
    <location>
        <position position="35"/>
    </location>
    <ligand>
        <name>mRNA</name>
        <dbReference type="ChEBI" id="CHEBI:33699"/>
    </ligand>
    <ligandPart>
        <name>mRNA cap</name>
    </ligandPart>
</feature>
<feature type="binding site" evidence="1">
    <location>
        <begin position="104"/>
        <end position="108"/>
    </location>
    <ligand>
        <name>mRNA</name>
        <dbReference type="ChEBI" id="CHEBI:33699"/>
    </ligand>
    <ligandPart>
        <name>mRNA cap</name>
    </ligandPart>
</feature>
<feature type="binding site" evidence="1">
    <location>
        <begin position="115"/>
        <end position="119"/>
    </location>
    <ligand>
        <name>mRNA</name>
        <dbReference type="ChEBI" id="CHEBI:33699"/>
    </ligand>
    <ligandPart>
        <name>mRNA cap</name>
    </ligandPart>
</feature>
<feature type="binding site" evidence="1">
    <location>
        <begin position="125"/>
        <end position="126"/>
    </location>
    <ligand>
        <name>mRNA</name>
        <dbReference type="ChEBI" id="CHEBI:33699"/>
    </ligand>
    <ligandPart>
        <name>mRNA cap</name>
    </ligandPart>
</feature>
<gene>
    <name type="primary">ncbp2</name>
    <name type="synonym">cbp20</name>
    <name type="ORF">DDB_G0287197</name>
</gene>
<organism>
    <name type="scientific">Dictyostelium discoideum</name>
    <name type="common">Social amoeba</name>
    <dbReference type="NCBI Taxonomy" id="44689"/>
    <lineage>
        <taxon>Eukaryota</taxon>
        <taxon>Amoebozoa</taxon>
        <taxon>Evosea</taxon>
        <taxon>Eumycetozoa</taxon>
        <taxon>Dictyostelia</taxon>
        <taxon>Dictyosteliales</taxon>
        <taxon>Dictyosteliaceae</taxon>
        <taxon>Dictyostelium</taxon>
    </lineage>
</organism>
<protein>
    <recommendedName>
        <fullName>Nuclear cap-binding protein subunit 2</fullName>
    </recommendedName>
    <alternativeName>
        <fullName>20 kDa nuclear cap-binding protein</fullName>
    </alternativeName>
    <alternativeName>
        <fullName>NCBP 20 kDa subunit</fullName>
        <shortName>CBP20</shortName>
    </alternativeName>
</protein>
<name>NCBP2_DICDI</name>
<sequence length="234" mass="27124">MSELYSTPQPFYYDKKSGFTQDEFKHAIDKSSTIYVGYLSFYTTEEQLYELFSKCGEIKRIIMGLDRNQKTPCGFCFVEYYSKEDAADCIKYINGSKLDERLIRCDWDYGFKEGRQYGRGLSGGQVRDEYRTDYDPGRGGYGKQRQFEMDQFSDVNGGDITYQQQILQLQQSQQQHQLYQQANAGGPQNYSGKRNRGADDDSDSFKRQRDNNGSISAGNTPNKGRFRERDEEDD</sequence>
<reference key="1">
    <citation type="journal article" date="2005" name="Nature">
        <title>The genome of the social amoeba Dictyostelium discoideum.</title>
        <authorList>
            <person name="Eichinger L."/>
            <person name="Pachebat J.A."/>
            <person name="Gloeckner G."/>
            <person name="Rajandream M.A."/>
            <person name="Sucgang R."/>
            <person name="Berriman M."/>
            <person name="Song J."/>
            <person name="Olsen R."/>
            <person name="Szafranski K."/>
            <person name="Xu Q."/>
            <person name="Tunggal B."/>
            <person name="Kummerfeld S."/>
            <person name="Madera M."/>
            <person name="Konfortov B.A."/>
            <person name="Rivero F."/>
            <person name="Bankier A.T."/>
            <person name="Lehmann R."/>
            <person name="Hamlin N."/>
            <person name="Davies R."/>
            <person name="Gaudet P."/>
            <person name="Fey P."/>
            <person name="Pilcher K."/>
            <person name="Chen G."/>
            <person name="Saunders D."/>
            <person name="Sodergren E.J."/>
            <person name="Davis P."/>
            <person name="Kerhornou A."/>
            <person name="Nie X."/>
            <person name="Hall N."/>
            <person name="Anjard C."/>
            <person name="Hemphill L."/>
            <person name="Bason N."/>
            <person name="Farbrother P."/>
            <person name="Desany B."/>
            <person name="Just E."/>
            <person name="Morio T."/>
            <person name="Rost R."/>
            <person name="Churcher C.M."/>
            <person name="Cooper J."/>
            <person name="Haydock S."/>
            <person name="van Driessche N."/>
            <person name="Cronin A."/>
            <person name="Goodhead I."/>
            <person name="Muzny D.M."/>
            <person name="Mourier T."/>
            <person name="Pain A."/>
            <person name="Lu M."/>
            <person name="Harper D."/>
            <person name="Lindsay R."/>
            <person name="Hauser H."/>
            <person name="James K.D."/>
            <person name="Quiles M."/>
            <person name="Madan Babu M."/>
            <person name="Saito T."/>
            <person name="Buchrieser C."/>
            <person name="Wardroper A."/>
            <person name="Felder M."/>
            <person name="Thangavelu M."/>
            <person name="Johnson D."/>
            <person name="Knights A."/>
            <person name="Loulseged H."/>
            <person name="Mungall K.L."/>
            <person name="Oliver K."/>
            <person name="Price C."/>
            <person name="Quail M.A."/>
            <person name="Urushihara H."/>
            <person name="Hernandez J."/>
            <person name="Rabbinowitsch E."/>
            <person name="Steffen D."/>
            <person name="Sanders M."/>
            <person name="Ma J."/>
            <person name="Kohara Y."/>
            <person name="Sharp S."/>
            <person name="Simmonds M.N."/>
            <person name="Spiegler S."/>
            <person name="Tivey A."/>
            <person name="Sugano S."/>
            <person name="White B."/>
            <person name="Walker D."/>
            <person name="Woodward J.R."/>
            <person name="Winckler T."/>
            <person name="Tanaka Y."/>
            <person name="Shaulsky G."/>
            <person name="Schleicher M."/>
            <person name="Weinstock G.M."/>
            <person name="Rosenthal A."/>
            <person name="Cox E.C."/>
            <person name="Chisholm R.L."/>
            <person name="Gibbs R.A."/>
            <person name="Loomis W.F."/>
            <person name="Platzer M."/>
            <person name="Kay R.R."/>
            <person name="Williams J.G."/>
            <person name="Dear P.H."/>
            <person name="Noegel A.A."/>
            <person name="Barrell B.G."/>
            <person name="Kuspa A."/>
        </authorList>
    </citation>
    <scope>NUCLEOTIDE SEQUENCE [LARGE SCALE GENOMIC DNA]</scope>
    <source>
        <strain>AX4</strain>
    </source>
</reference>